<evidence type="ECO:0000255" key="1">
    <source>
        <dbReference type="HAMAP-Rule" id="MF_00693"/>
    </source>
</evidence>
<sequence length="248" mass="26827">MSGHSKWATIKHKKGALDAKRGKIFTRLIKEITMAAKQGGDAEKNPRLRSAVAAAKAENMPADNIKRAIQRGTGEIEGVNYEEITFEGYGPGGVAILVEVTTDNRNRTVSEIRHAFGKNGGNMGEAGSVAWMFAKKGSIVIAKAAAKEDDLMNLVLENGADDLKDDGDNWEILCDPNAYEGVLEAVKKAGITPEVAEIGMIPQNYIKLEGNQVNTMVRLLEALEDGDDVQHVYSNVDFDQAQLEQVAG</sequence>
<protein>
    <recommendedName>
        <fullName evidence="1">Probable transcriptional regulatory protein Acid345_2125</fullName>
    </recommendedName>
</protein>
<organism>
    <name type="scientific">Koribacter versatilis (strain Ellin345)</name>
    <dbReference type="NCBI Taxonomy" id="204669"/>
    <lineage>
        <taxon>Bacteria</taxon>
        <taxon>Pseudomonadati</taxon>
        <taxon>Acidobacteriota</taxon>
        <taxon>Terriglobia</taxon>
        <taxon>Terriglobales</taxon>
        <taxon>Candidatus Korobacteraceae</taxon>
        <taxon>Candidatus Korobacter</taxon>
    </lineage>
</organism>
<reference key="1">
    <citation type="journal article" date="2009" name="Appl. Environ. Microbiol.">
        <title>Three genomes from the phylum Acidobacteria provide insight into the lifestyles of these microorganisms in soils.</title>
        <authorList>
            <person name="Ward N.L."/>
            <person name="Challacombe J.F."/>
            <person name="Janssen P.H."/>
            <person name="Henrissat B."/>
            <person name="Coutinho P.M."/>
            <person name="Wu M."/>
            <person name="Xie G."/>
            <person name="Haft D.H."/>
            <person name="Sait M."/>
            <person name="Badger J."/>
            <person name="Barabote R.D."/>
            <person name="Bradley B."/>
            <person name="Brettin T.S."/>
            <person name="Brinkac L.M."/>
            <person name="Bruce D."/>
            <person name="Creasy T."/>
            <person name="Daugherty S.C."/>
            <person name="Davidsen T.M."/>
            <person name="DeBoy R.T."/>
            <person name="Detter J.C."/>
            <person name="Dodson R.J."/>
            <person name="Durkin A.S."/>
            <person name="Ganapathy A."/>
            <person name="Gwinn-Giglio M."/>
            <person name="Han C.S."/>
            <person name="Khouri H."/>
            <person name="Kiss H."/>
            <person name="Kothari S.P."/>
            <person name="Madupu R."/>
            <person name="Nelson K.E."/>
            <person name="Nelson W.C."/>
            <person name="Paulsen I."/>
            <person name="Penn K."/>
            <person name="Ren Q."/>
            <person name="Rosovitz M.J."/>
            <person name="Selengut J.D."/>
            <person name="Shrivastava S."/>
            <person name="Sullivan S.A."/>
            <person name="Tapia R."/>
            <person name="Thompson L.S."/>
            <person name="Watkins K.L."/>
            <person name="Yang Q."/>
            <person name="Yu C."/>
            <person name="Zafar N."/>
            <person name="Zhou L."/>
            <person name="Kuske C.R."/>
        </authorList>
    </citation>
    <scope>NUCLEOTIDE SEQUENCE [LARGE SCALE GENOMIC DNA]</scope>
    <source>
        <strain>Ellin345</strain>
    </source>
</reference>
<comment type="subcellular location">
    <subcellularLocation>
        <location evidence="1">Cytoplasm</location>
    </subcellularLocation>
</comment>
<comment type="similarity">
    <text evidence="1">Belongs to the TACO1 family.</text>
</comment>
<accession>Q1IPS4</accession>
<keyword id="KW-0963">Cytoplasm</keyword>
<keyword id="KW-0238">DNA-binding</keyword>
<keyword id="KW-1185">Reference proteome</keyword>
<keyword id="KW-0804">Transcription</keyword>
<keyword id="KW-0805">Transcription regulation</keyword>
<gene>
    <name type="ordered locus">Acid345_2125</name>
</gene>
<dbReference type="EMBL" id="CP000360">
    <property type="protein sequence ID" value="ABF41126.1"/>
    <property type="molecule type" value="Genomic_DNA"/>
</dbReference>
<dbReference type="RefSeq" id="WP_011522927.1">
    <property type="nucleotide sequence ID" value="NC_008009.1"/>
</dbReference>
<dbReference type="SMR" id="Q1IPS4"/>
<dbReference type="STRING" id="204669.Acid345_2125"/>
<dbReference type="EnsemblBacteria" id="ABF41126">
    <property type="protein sequence ID" value="ABF41126"/>
    <property type="gene ID" value="Acid345_2125"/>
</dbReference>
<dbReference type="KEGG" id="aba:Acid345_2125"/>
<dbReference type="eggNOG" id="COG0217">
    <property type="taxonomic scope" value="Bacteria"/>
</dbReference>
<dbReference type="HOGENOM" id="CLU_062974_2_2_0"/>
<dbReference type="OrthoDB" id="9781053at2"/>
<dbReference type="Proteomes" id="UP000002432">
    <property type="component" value="Chromosome"/>
</dbReference>
<dbReference type="GO" id="GO:0005829">
    <property type="term" value="C:cytosol"/>
    <property type="evidence" value="ECO:0007669"/>
    <property type="project" value="TreeGrafter"/>
</dbReference>
<dbReference type="GO" id="GO:0003677">
    <property type="term" value="F:DNA binding"/>
    <property type="evidence" value="ECO:0007669"/>
    <property type="project" value="UniProtKB-UniRule"/>
</dbReference>
<dbReference type="GO" id="GO:0006355">
    <property type="term" value="P:regulation of DNA-templated transcription"/>
    <property type="evidence" value="ECO:0007669"/>
    <property type="project" value="UniProtKB-UniRule"/>
</dbReference>
<dbReference type="FunFam" id="1.10.10.200:FF:000002">
    <property type="entry name" value="Probable transcriptional regulatory protein CLM62_37755"/>
    <property type="match status" value="1"/>
</dbReference>
<dbReference type="Gene3D" id="1.10.10.200">
    <property type="match status" value="1"/>
</dbReference>
<dbReference type="Gene3D" id="3.30.70.980">
    <property type="match status" value="2"/>
</dbReference>
<dbReference type="HAMAP" id="MF_00693">
    <property type="entry name" value="Transcrip_reg_TACO1"/>
    <property type="match status" value="1"/>
</dbReference>
<dbReference type="InterPro" id="IPR017856">
    <property type="entry name" value="Integrase-like_N"/>
</dbReference>
<dbReference type="InterPro" id="IPR048300">
    <property type="entry name" value="TACO1_YebC-like_2nd/3rd_dom"/>
</dbReference>
<dbReference type="InterPro" id="IPR049083">
    <property type="entry name" value="TACO1_YebC_N"/>
</dbReference>
<dbReference type="InterPro" id="IPR002876">
    <property type="entry name" value="Transcrip_reg_TACO1-like"/>
</dbReference>
<dbReference type="InterPro" id="IPR026564">
    <property type="entry name" value="Transcrip_reg_TACO1-like_dom3"/>
</dbReference>
<dbReference type="InterPro" id="IPR029072">
    <property type="entry name" value="YebC-like"/>
</dbReference>
<dbReference type="NCBIfam" id="NF001030">
    <property type="entry name" value="PRK00110.1"/>
    <property type="match status" value="1"/>
</dbReference>
<dbReference type="NCBIfam" id="NF009044">
    <property type="entry name" value="PRK12378.1"/>
    <property type="match status" value="1"/>
</dbReference>
<dbReference type="NCBIfam" id="TIGR01033">
    <property type="entry name" value="YebC/PmpR family DNA-binding transcriptional regulator"/>
    <property type="match status" value="1"/>
</dbReference>
<dbReference type="PANTHER" id="PTHR12532:SF6">
    <property type="entry name" value="TRANSCRIPTIONAL REGULATORY PROTEIN YEBC-RELATED"/>
    <property type="match status" value="1"/>
</dbReference>
<dbReference type="PANTHER" id="PTHR12532">
    <property type="entry name" value="TRANSLATIONAL ACTIVATOR OF CYTOCHROME C OXIDASE 1"/>
    <property type="match status" value="1"/>
</dbReference>
<dbReference type="Pfam" id="PF20772">
    <property type="entry name" value="TACO1_YebC_N"/>
    <property type="match status" value="1"/>
</dbReference>
<dbReference type="Pfam" id="PF01709">
    <property type="entry name" value="Transcrip_reg"/>
    <property type="match status" value="1"/>
</dbReference>
<dbReference type="SUPFAM" id="SSF75625">
    <property type="entry name" value="YebC-like"/>
    <property type="match status" value="1"/>
</dbReference>
<feature type="chain" id="PRO_0000257026" description="Probable transcriptional regulatory protein Acid345_2125">
    <location>
        <begin position="1"/>
        <end position="248"/>
    </location>
</feature>
<name>Y2125_KORVE</name>
<proteinExistence type="inferred from homology"/>